<protein>
    <recommendedName>
        <fullName>Long-chain fatty acid transport protein 6</fullName>
        <shortName evidence="5">FATP-6</shortName>
        <shortName>Fatty acid transport protein 6</shortName>
    </recommendedName>
    <alternativeName>
        <fullName evidence="1">Arachidonate--CoA ligase</fullName>
        <ecNumber evidence="1">6.2.1.15</ecNumber>
    </alternativeName>
    <alternativeName>
        <fullName evidence="1">Fatty-acid-coenzyme A ligase, very long-chain 2</fullName>
    </alternativeName>
    <alternativeName>
        <fullName>Long-chain-fatty-acid--CoA ligase</fullName>
        <ecNumber evidence="1">6.2.1.3</ecNumber>
    </alternativeName>
    <alternativeName>
        <fullName>Solute carrier family 27 member 6</fullName>
    </alternativeName>
    <alternativeName>
        <fullName>Very long-chain acyl-CoA synthetase homolog 1</fullName>
        <shortName>VLCSH1</shortName>
        <shortName>hVLCS-H1</shortName>
        <ecNumber evidence="1">6.2.1.-</ecNumber>
    </alternativeName>
</protein>
<gene>
    <name type="primary">SLC27A6</name>
    <name type="synonym">ACSVL2</name>
    <name type="synonym">FACVL2</name>
    <name type="synonym">FATP6</name>
</gene>
<proteinExistence type="evidence at protein level"/>
<name>S27A6_HUMAN</name>
<organism>
    <name type="scientific">Homo sapiens</name>
    <name type="common">Human</name>
    <dbReference type="NCBI Taxonomy" id="9606"/>
    <lineage>
        <taxon>Eukaryota</taxon>
        <taxon>Metazoa</taxon>
        <taxon>Chordata</taxon>
        <taxon>Craniata</taxon>
        <taxon>Vertebrata</taxon>
        <taxon>Euteleostomi</taxon>
        <taxon>Mammalia</taxon>
        <taxon>Eutheria</taxon>
        <taxon>Euarchontoglires</taxon>
        <taxon>Primates</taxon>
        <taxon>Haplorrhini</taxon>
        <taxon>Catarrhini</taxon>
        <taxon>Hominidae</taxon>
        <taxon>Homo</taxon>
    </lineage>
</organism>
<feature type="chain" id="PRO_0000193216" description="Long-chain fatty acid transport protein 6">
    <location>
        <begin position="1"/>
        <end position="619"/>
    </location>
</feature>
<feature type="transmembrane region" description="Helical" evidence="2">
    <location>
        <begin position="22"/>
        <end position="42"/>
    </location>
</feature>
<feature type="transmembrane region" description="Helical" evidence="2">
    <location>
        <begin position="119"/>
        <end position="139"/>
    </location>
</feature>
<feature type="binding site" evidence="2">
    <location>
        <begin position="221"/>
        <end position="232"/>
    </location>
    <ligand>
        <name>AMP</name>
        <dbReference type="ChEBI" id="CHEBI:456215"/>
    </ligand>
</feature>
<feature type="sequence variant" id="VAR_048245" description="In dbSNP:rs2526247." evidence="4">
    <original>L</original>
    <variation>V</variation>
    <location>
        <position position="19"/>
    </location>
</feature>
<feature type="sequence conflict" description="In Ref. 5; AAH41945." evidence="6" ref="5">
    <original>P</original>
    <variation>T</variation>
    <location>
        <position position="25"/>
    </location>
</feature>
<feature type="sequence conflict" description="In Ref. 4; CAD97625." evidence="6" ref="4">
    <original>R</original>
    <variation>H</variation>
    <location>
        <position position="207"/>
    </location>
</feature>
<feature type="sequence conflict" description="In Ref. 5; AAH41945." evidence="6" ref="5">
    <original>L</original>
    <variation>I</variation>
    <location>
        <position position="215"/>
    </location>
</feature>
<feature type="sequence conflict" description="In Ref. 3; CAG33410." evidence="6" ref="3">
    <original>P</original>
    <variation>S</variation>
    <location>
        <position position="231"/>
    </location>
</feature>
<feature type="sequence conflict" description="In Ref. 4; CAD97625." evidence="6" ref="4">
    <original>N</original>
    <variation>S</variation>
    <location>
        <position position="432"/>
    </location>
</feature>
<feature type="sequence conflict" description="In Ref. 4; CAD97625." evidence="6" ref="4">
    <original>N</original>
    <variation>D</variation>
    <location>
        <position position="596"/>
    </location>
</feature>
<feature type="sequence conflict" description="In Ref. 3; CAG33410." evidence="6" ref="3">
    <original>K</original>
    <variation>N</variation>
    <location>
        <position position="618"/>
    </location>
</feature>
<evidence type="ECO:0000250" key="1">
    <source>
        <dbReference type="UniProtKB" id="E9Q9W4"/>
    </source>
</evidence>
<evidence type="ECO:0000255" key="2"/>
<evidence type="ECO:0000269" key="3">
    <source>
    </source>
</evidence>
<evidence type="ECO:0000269" key="4">
    <source>
    </source>
</evidence>
<evidence type="ECO:0000303" key="5">
    <source>
    </source>
</evidence>
<evidence type="ECO:0000305" key="6"/>
<evidence type="ECO:0000305" key="7">
    <source>
    </source>
</evidence>
<sequence length="619" mass="70112">MLLSWLTVLGAGMVVLHFLQKLLFPYFWDDFWFVLKVVLIIIRLKKYEKRGELVTVLDKFLSHAKRQPRKPFIIYEGDIYTYQDVDKRSSRVAHVFLNHSSLKKGDTVALLMSNEPDFVHVWFGLAKLGCVVAFLNTNIRSNSLLNCIRACGPRALVVGADLLGTVEEILPSLSENISVWGMKDSVPQGVISLKEKLSTSPDEPVPRSHHVVSLLKSTCLYIFTSGTTGLPKAAVISQLQVLRGSAVLWAFGCTAHDIVYITLPLYHSSAAILGISGCVELGATCVLKKKFSASQFWSDCKKYDVTVFQYIGELCRYLCKQSKREGEKDHKVRLAIGNGIRSDVWREFLDRFGNIKVCELYAATESSISFMNYTGRIGAIGRTNLFYKLLSTFDLIKYDFQKDEPMRNEQGWCIHVKKGEPGLLISRVNAKNPFFGYAGPYKHTKDKLLCDVFKKGDVYLNTGDLIVQDQDNFLYFWDRTGDTFRWKGENVATTEVADVIGMLDFIQEANVYGVAISGYEGRAGMASIILKPNTSLDLEKVYEQVVTFLPAYACPRFLRIQEKMEATGTFKLLKHQLVEDGFNPLKISEPLYFMDNLKKSYVLLTRELYDQIMLGEIKL</sequence>
<accession>Q9Y2P4</accession>
<accession>Q6IAM5</accession>
<accession>Q7Z6E6</accession>
<accession>Q86YF6</accession>
<reference key="1">
    <citation type="journal article" date="2003" name="J. Biol. Chem.">
        <title>Characterization of a heart-specific fatty acid transport protein.</title>
        <authorList>
            <person name="Gimeno R.E."/>
            <person name="Ortegon A.M."/>
            <person name="Patel S."/>
            <person name="Punreddy S."/>
            <person name="Ge P."/>
            <person name="Sun Y."/>
            <person name="Lodish H.F."/>
            <person name="Stahl A."/>
        </authorList>
    </citation>
    <scope>NUCLEOTIDE SEQUENCE [MRNA]</scope>
    <scope>FUNCTION</scope>
    <scope>SUBCELLULAR LOCATION</scope>
    <scope>TISSUE SPECIFICITY</scope>
    <scope>TRANSPORT ACTIVITY</scope>
</reference>
<reference key="2">
    <citation type="submission" date="1998-05" db="EMBL/GenBank/DDBJ databases">
        <title>Human very long-chain acyl-CoA synthetase homolog 1.</title>
        <authorList>
            <person name="Steinberg S.J."/>
            <person name="Watkins P.A."/>
        </authorList>
    </citation>
    <scope>NUCLEOTIDE SEQUENCE [MRNA]</scope>
</reference>
<reference key="3">
    <citation type="submission" date="2004-06" db="EMBL/GenBank/DDBJ databases">
        <title>Cloning of human full open reading frames in Gateway(TM) system entry vector (pDONR201).</title>
        <authorList>
            <person name="Ebert L."/>
            <person name="Schick M."/>
            <person name="Neubert P."/>
            <person name="Schatten R."/>
            <person name="Henze S."/>
            <person name="Korn B."/>
        </authorList>
    </citation>
    <scope>NUCLEOTIDE SEQUENCE [LARGE SCALE MRNA]</scope>
</reference>
<reference key="4">
    <citation type="journal article" date="2007" name="BMC Genomics">
        <title>The full-ORF clone resource of the German cDNA consortium.</title>
        <authorList>
            <person name="Bechtel S."/>
            <person name="Rosenfelder H."/>
            <person name="Duda A."/>
            <person name="Schmidt C.P."/>
            <person name="Ernst U."/>
            <person name="Wellenreuther R."/>
            <person name="Mehrle A."/>
            <person name="Schuster C."/>
            <person name="Bahr A."/>
            <person name="Bloecker H."/>
            <person name="Heubner D."/>
            <person name="Hoerlein A."/>
            <person name="Michel G."/>
            <person name="Wedler H."/>
            <person name="Koehrer K."/>
            <person name="Ottenwaelder B."/>
            <person name="Poustka A."/>
            <person name="Wiemann S."/>
            <person name="Schupp I."/>
        </authorList>
    </citation>
    <scope>NUCLEOTIDE SEQUENCE [LARGE SCALE MRNA]</scope>
    <source>
        <tissue>Liver</tissue>
    </source>
</reference>
<reference key="5">
    <citation type="journal article" date="2004" name="Genome Res.">
        <title>The status, quality, and expansion of the NIH full-length cDNA project: the Mammalian Gene Collection (MGC).</title>
        <authorList>
            <consortium name="The MGC Project Team"/>
        </authorList>
    </citation>
    <scope>NUCLEOTIDE SEQUENCE [LARGE SCALE MRNA]</scope>
    <scope>VARIANT VAL-19</scope>
    <source>
        <tissue>Brain</tissue>
    </source>
</reference>
<comment type="function">
    <text evidence="1 3">Mediates the import of long-chain fatty acids (LCFA) into the cell by facilitating their transport at the plasma membrane (PubMed:12556534). Also functions as an acyl-CoA ligase catalyzing the ATP-dependent formation of fatty acyl-CoA using LCFA and very-long-chain fatty acids (VLCFA) as substrates (By similarity). Plays a pivotal role in regulating available LCFA substrates from exogenous sources in tissues undergoing high levels of beta-oxidation such as the heart (PubMed:12556534).</text>
</comment>
<comment type="catalytic activity">
    <reaction evidence="3">
        <text>a fatty acid(in) = a fatty acid(out)</text>
        <dbReference type="Rhea" id="RHEA:38879"/>
        <dbReference type="ChEBI" id="CHEBI:28868"/>
    </reaction>
</comment>
<comment type="catalytic activity">
    <reaction evidence="3">
        <text>hexadecanoate(out) = hexadecanoate(in)</text>
        <dbReference type="Rhea" id="RHEA:45256"/>
        <dbReference type="ChEBI" id="CHEBI:7896"/>
    </reaction>
</comment>
<comment type="catalytic activity">
    <reaction evidence="3">
        <text>(9Z)-octadecenoate(out) = (9Z)-octadecenoate(in)</text>
        <dbReference type="Rhea" id="RHEA:33655"/>
        <dbReference type="ChEBI" id="CHEBI:30823"/>
    </reaction>
</comment>
<comment type="catalytic activity">
    <reaction evidence="3">
        <text>(9Z,12Z)-octadecadienoate(out) = (9Z,12Z)-octadecadienoate(in)</text>
        <dbReference type="Rhea" id="RHEA:45264"/>
        <dbReference type="ChEBI" id="CHEBI:30245"/>
    </reaction>
</comment>
<comment type="catalytic activity">
    <reaction evidence="1">
        <text>a very long-chain fatty acid + ATP + CoA = a very long-chain fatty acyl-CoA + AMP + diphosphate</text>
        <dbReference type="Rhea" id="RHEA:54536"/>
        <dbReference type="ChEBI" id="CHEBI:30616"/>
        <dbReference type="ChEBI" id="CHEBI:33019"/>
        <dbReference type="ChEBI" id="CHEBI:57287"/>
        <dbReference type="ChEBI" id="CHEBI:58950"/>
        <dbReference type="ChEBI" id="CHEBI:138261"/>
        <dbReference type="ChEBI" id="CHEBI:456215"/>
    </reaction>
    <physiologicalReaction direction="left-to-right" evidence="1">
        <dbReference type="Rhea" id="RHEA:54537"/>
    </physiologicalReaction>
</comment>
<comment type="catalytic activity">
    <reaction evidence="1">
        <text>tetracosanoate + ATP + CoA = tetracosanoyl-CoA + AMP + diphosphate</text>
        <dbReference type="Rhea" id="RHEA:33639"/>
        <dbReference type="ChEBI" id="CHEBI:30616"/>
        <dbReference type="ChEBI" id="CHEBI:31014"/>
        <dbReference type="ChEBI" id="CHEBI:33019"/>
        <dbReference type="ChEBI" id="CHEBI:57287"/>
        <dbReference type="ChEBI" id="CHEBI:65052"/>
        <dbReference type="ChEBI" id="CHEBI:456215"/>
    </reaction>
    <physiologicalReaction direction="left-to-right" evidence="1">
        <dbReference type="Rhea" id="RHEA:33640"/>
    </physiologicalReaction>
</comment>
<comment type="catalytic activity">
    <reaction evidence="1">
        <text>a long-chain fatty acid + ATP + CoA = a long-chain fatty acyl-CoA + AMP + diphosphate</text>
        <dbReference type="Rhea" id="RHEA:15421"/>
        <dbReference type="ChEBI" id="CHEBI:30616"/>
        <dbReference type="ChEBI" id="CHEBI:33019"/>
        <dbReference type="ChEBI" id="CHEBI:57287"/>
        <dbReference type="ChEBI" id="CHEBI:57560"/>
        <dbReference type="ChEBI" id="CHEBI:83139"/>
        <dbReference type="ChEBI" id="CHEBI:456215"/>
        <dbReference type="EC" id="6.2.1.3"/>
    </reaction>
    <physiologicalReaction direction="left-to-right" evidence="1">
        <dbReference type="Rhea" id="RHEA:15422"/>
    </physiologicalReaction>
</comment>
<comment type="catalytic activity">
    <reaction evidence="1">
        <text>(5Z,8Z,11Z,14Z)-eicosatetraenoate + ATP + CoA = (5Z,8Z,11Z,14Z)-eicosatetraenoyl-CoA + AMP + diphosphate</text>
        <dbReference type="Rhea" id="RHEA:19713"/>
        <dbReference type="ChEBI" id="CHEBI:30616"/>
        <dbReference type="ChEBI" id="CHEBI:32395"/>
        <dbReference type="ChEBI" id="CHEBI:33019"/>
        <dbReference type="ChEBI" id="CHEBI:57287"/>
        <dbReference type="ChEBI" id="CHEBI:57368"/>
        <dbReference type="ChEBI" id="CHEBI:456215"/>
        <dbReference type="EC" id="6.2.1.15"/>
    </reaction>
    <physiologicalReaction direction="left-to-right" evidence="1">
        <dbReference type="Rhea" id="RHEA:19714"/>
    </physiologicalReaction>
</comment>
<comment type="catalytic activity">
    <reaction evidence="1">
        <text>(9Z)-octadecenoate + ATP + CoA = (9Z)-octadecenoyl-CoA + AMP + diphosphate</text>
        <dbReference type="Rhea" id="RHEA:33607"/>
        <dbReference type="ChEBI" id="CHEBI:30616"/>
        <dbReference type="ChEBI" id="CHEBI:30823"/>
        <dbReference type="ChEBI" id="CHEBI:33019"/>
        <dbReference type="ChEBI" id="CHEBI:57287"/>
        <dbReference type="ChEBI" id="CHEBI:57387"/>
        <dbReference type="ChEBI" id="CHEBI:456215"/>
    </reaction>
    <physiologicalReaction direction="left-to-right" evidence="1">
        <dbReference type="Rhea" id="RHEA:33608"/>
    </physiologicalReaction>
</comment>
<comment type="subcellular location">
    <subcellularLocation>
        <location evidence="7">Cell membrane</location>
        <location evidence="7">Sarcolemma</location>
        <topology evidence="2">Multi-pass membrane protein</topology>
    </subcellularLocation>
    <subcellularLocation>
        <location evidence="1">Cell membrane</location>
        <topology evidence="2">Multi-pass membrane protein</topology>
    </subcellularLocation>
    <text evidence="7">In heart is exclusively located on the sarcolemma in areas juxtaposed with small blood vessels where it colocalizes CD36.</text>
</comment>
<comment type="tissue specificity">
    <text evidence="3">Strongly expressed in heart and localizes to cardiac myocytes (PubMed:12556534). Expressed at moderate levels in placenta, testis, and adrenal glands. Expressed at very low levels in kidney, bladder and uterus.</text>
</comment>
<comment type="similarity">
    <text evidence="6">Belongs to the ATP-dependent AMP-binding enzyme family.</text>
</comment>
<dbReference type="EC" id="6.2.1.15" evidence="1"/>
<dbReference type="EC" id="6.2.1.3" evidence="1"/>
<dbReference type="EC" id="6.2.1.-" evidence="1"/>
<dbReference type="EMBL" id="AF064254">
    <property type="protein sequence ID" value="AAD29443.1"/>
    <property type="molecule type" value="mRNA"/>
</dbReference>
<dbReference type="EMBL" id="CR457129">
    <property type="protein sequence ID" value="CAG33410.1"/>
    <property type="molecule type" value="mRNA"/>
</dbReference>
<dbReference type="EMBL" id="BX537383">
    <property type="protein sequence ID" value="CAD97625.1"/>
    <property type="molecule type" value="mRNA"/>
</dbReference>
<dbReference type="EMBL" id="BC041945">
    <property type="protein sequence ID" value="AAH41945.1"/>
    <property type="molecule type" value="mRNA"/>
</dbReference>
<dbReference type="CCDS" id="CCDS4145.1"/>
<dbReference type="RefSeq" id="NP_001017372.1">
    <property type="nucleotide sequence ID" value="NM_001017372.3"/>
</dbReference>
<dbReference type="RefSeq" id="NP_001304913.1">
    <property type="nucleotide sequence ID" value="NM_001317984.2"/>
</dbReference>
<dbReference type="RefSeq" id="NP_054750.1">
    <property type="nucleotide sequence ID" value="NM_014031.5"/>
</dbReference>
<dbReference type="SMR" id="Q9Y2P4"/>
<dbReference type="BioGRID" id="118790">
    <property type="interactions" value="84"/>
</dbReference>
<dbReference type="FunCoup" id="Q9Y2P4">
    <property type="interactions" value="489"/>
</dbReference>
<dbReference type="IntAct" id="Q9Y2P4">
    <property type="interactions" value="46"/>
</dbReference>
<dbReference type="STRING" id="9606.ENSP00000262462"/>
<dbReference type="SwissLipids" id="SLP:000001263"/>
<dbReference type="TCDB" id="4.C.1.1.11">
    <property type="family name" value="the fatty acid group translocation (fat) family"/>
</dbReference>
<dbReference type="GlyGen" id="Q9Y2P4">
    <property type="glycosylation" value="1 site, 1 O-linked glycan (1 site)"/>
</dbReference>
<dbReference type="iPTMnet" id="Q9Y2P4"/>
<dbReference type="PhosphoSitePlus" id="Q9Y2P4"/>
<dbReference type="BioMuta" id="SLC27A6"/>
<dbReference type="DMDM" id="74725713"/>
<dbReference type="jPOST" id="Q9Y2P4"/>
<dbReference type="MassIVE" id="Q9Y2P4"/>
<dbReference type="PaxDb" id="9606-ENSP00000262462"/>
<dbReference type="PeptideAtlas" id="Q9Y2P4"/>
<dbReference type="ProteomicsDB" id="85853"/>
<dbReference type="Pumba" id="Q9Y2P4"/>
<dbReference type="Antibodypedia" id="1944">
    <property type="antibodies" value="85 antibodies from 21 providers"/>
</dbReference>
<dbReference type="DNASU" id="28965"/>
<dbReference type="Ensembl" id="ENST00000262462.9">
    <property type="protein sequence ID" value="ENSP00000262462.4"/>
    <property type="gene ID" value="ENSG00000113396.13"/>
</dbReference>
<dbReference type="Ensembl" id="ENST00000395266.5">
    <property type="protein sequence ID" value="ENSP00000378684.1"/>
    <property type="gene ID" value="ENSG00000113396.13"/>
</dbReference>
<dbReference type="Ensembl" id="ENST00000506176.1">
    <property type="protein sequence ID" value="ENSP00000421024.1"/>
    <property type="gene ID" value="ENSG00000113396.13"/>
</dbReference>
<dbReference type="GeneID" id="28965"/>
<dbReference type="KEGG" id="hsa:28965"/>
<dbReference type="MANE-Select" id="ENST00000262462.9">
    <property type="protein sequence ID" value="ENSP00000262462.4"/>
    <property type="RefSeq nucleotide sequence ID" value="NM_001017372.3"/>
    <property type="RefSeq protein sequence ID" value="NP_001017372.1"/>
</dbReference>
<dbReference type="UCSC" id="uc003kuy.3">
    <property type="organism name" value="human"/>
</dbReference>
<dbReference type="AGR" id="HGNC:11000"/>
<dbReference type="CTD" id="28965"/>
<dbReference type="DisGeNET" id="28965"/>
<dbReference type="GeneCards" id="SLC27A6"/>
<dbReference type="HGNC" id="HGNC:11000">
    <property type="gene designation" value="SLC27A6"/>
</dbReference>
<dbReference type="HPA" id="ENSG00000113396">
    <property type="expression patterns" value="Tissue enhanced (adrenal gland, fallopian tube, heart muscle)"/>
</dbReference>
<dbReference type="MIM" id="604196">
    <property type="type" value="gene"/>
</dbReference>
<dbReference type="neXtProt" id="NX_Q9Y2P4"/>
<dbReference type="OpenTargets" id="ENSG00000113396"/>
<dbReference type="PharmGKB" id="PA35874"/>
<dbReference type="VEuPathDB" id="HostDB:ENSG00000113396"/>
<dbReference type="eggNOG" id="KOG1179">
    <property type="taxonomic scope" value="Eukaryota"/>
</dbReference>
<dbReference type="GeneTree" id="ENSGT00940000159700"/>
<dbReference type="HOGENOM" id="CLU_000022_46_2_1"/>
<dbReference type="InParanoid" id="Q9Y2P4"/>
<dbReference type="OMA" id="VWRQFLD"/>
<dbReference type="OrthoDB" id="288590at2759"/>
<dbReference type="PAN-GO" id="Q9Y2P4">
    <property type="GO annotations" value="2 GO annotations based on evolutionary models"/>
</dbReference>
<dbReference type="PhylomeDB" id="Q9Y2P4"/>
<dbReference type="TreeFam" id="TF313430"/>
<dbReference type="PathwayCommons" id="Q9Y2P4"/>
<dbReference type="Reactome" id="R-HSA-804914">
    <property type="pathway name" value="Transport of fatty acids"/>
</dbReference>
<dbReference type="SignaLink" id="Q9Y2P4"/>
<dbReference type="SIGNOR" id="Q9Y2P4"/>
<dbReference type="BioGRID-ORCS" id="28965">
    <property type="hits" value="13 hits in 1160 CRISPR screens"/>
</dbReference>
<dbReference type="ChiTaRS" id="SLC27A6">
    <property type="organism name" value="human"/>
</dbReference>
<dbReference type="GeneWiki" id="SLC27A6"/>
<dbReference type="GenomeRNAi" id="28965"/>
<dbReference type="Pharos" id="Q9Y2P4">
    <property type="development level" value="Tbio"/>
</dbReference>
<dbReference type="PRO" id="PR:Q9Y2P4"/>
<dbReference type="Proteomes" id="UP000005640">
    <property type="component" value="Chromosome 5"/>
</dbReference>
<dbReference type="RNAct" id="Q9Y2P4">
    <property type="molecule type" value="protein"/>
</dbReference>
<dbReference type="Bgee" id="ENSG00000113396">
    <property type="expression patterns" value="Expressed in secondary oocyte and 121 other cell types or tissues"/>
</dbReference>
<dbReference type="ExpressionAtlas" id="Q9Y2P4">
    <property type="expression patterns" value="baseline and differential"/>
</dbReference>
<dbReference type="GO" id="GO:0005789">
    <property type="term" value="C:endoplasmic reticulum membrane"/>
    <property type="evidence" value="ECO:0000318"/>
    <property type="project" value="GO_Central"/>
</dbReference>
<dbReference type="GO" id="GO:0005886">
    <property type="term" value="C:plasma membrane"/>
    <property type="evidence" value="ECO:0000318"/>
    <property type="project" value="GO_Central"/>
</dbReference>
<dbReference type="GO" id="GO:0042383">
    <property type="term" value="C:sarcolemma"/>
    <property type="evidence" value="ECO:0007669"/>
    <property type="project" value="UniProtKB-SubCell"/>
</dbReference>
<dbReference type="GO" id="GO:0047676">
    <property type="term" value="F:arachidonate-CoA ligase activity"/>
    <property type="evidence" value="ECO:0007669"/>
    <property type="project" value="UniProtKB-EC"/>
</dbReference>
<dbReference type="GO" id="GO:0015245">
    <property type="term" value="F:fatty acid transmembrane transporter activity"/>
    <property type="evidence" value="ECO:0000304"/>
    <property type="project" value="Reactome"/>
</dbReference>
<dbReference type="GO" id="GO:0005324">
    <property type="term" value="F:long-chain fatty acid transmembrane transporter activity"/>
    <property type="evidence" value="ECO:0000318"/>
    <property type="project" value="GO_Central"/>
</dbReference>
<dbReference type="GO" id="GO:0004467">
    <property type="term" value="F:long-chain fatty acid-CoA ligase activity"/>
    <property type="evidence" value="ECO:0000318"/>
    <property type="project" value="GO_Central"/>
</dbReference>
<dbReference type="GO" id="GO:0000166">
    <property type="term" value="F:nucleotide binding"/>
    <property type="evidence" value="ECO:0007669"/>
    <property type="project" value="UniProtKB-KW"/>
</dbReference>
<dbReference type="GO" id="GO:0031957">
    <property type="term" value="F:very long-chain fatty acid-CoA ligase activity"/>
    <property type="evidence" value="ECO:0007669"/>
    <property type="project" value="Ensembl"/>
</dbReference>
<dbReference type="GO" id="GO:0044539">
    <property type="term" value="P:long-chain fatty acid import into cell"/>
    <property type="evidence" value="ECO:0000318"/>
    <property type="project" value="GO_Central"/>
</dbReference>
<dbReference type="GO" id="GO:0001676">
    <property type="term" value="P:long-chain fatty acid metabolic process"/>
    <property type="evidence" value="ECO:0000318"/>
    <property type="project" value="GO_Central"/>
</dbReference>
<dbReference type="GO" id="GO:0015909">
    <property type="term" value="P:long-chain fatty acid transport"/>
    <property type="evidence" value="ECO:0000304"/>
    <property type="project" value="Reactome"/>
</dbReference>
<dbReference type="GO" id="GO:0000038">
    <property type="term" value="P:very long-chain fatty acid metabolic process"/>
    <property type="evidence" value="ECO:0000304"/>
    <property type="project" value="ProtInc"/>
</dbReference>
<dbReference type="CDD" id="cd05938">
    <property type="entry name" value="hsFATP2a_ACSVL_like"/>
    <property type="match status" value="1"/>
</dbReference>
<dbReference type="FunFam" id="3.30.300.30:FF:000002">
    <property type="entry name" value="Long-chain fatty acid transport protein 1"/>
    <property type="match status" value="1"/>
</dbReference>
<dbReference type="FunFam" id="3.40.50.12780:FF:000005">
    <property type="entry name" value="Solute carrier family 27 member 6"/>
    <property type="match status" value="1"/>
</dbReference>
<dbReference type="Gene3D" id="3.30.300.30">
    <property type="match status" value="1"/>
</dbReference>
<dbReference type="Gene3D" id="3.40.50.12780">
    <property type="entry name" value="N-terminal domain of ligase-like"/>
    <property type="match status" value="1"/>
</dbReference>
<dbReference type="InterPro" id="IPR025110">
    <property type="entry name" value="AMP-bd_C"/>
</dbReference>
<dbReference type="InterPro" id="IPR045851">
    <property type="entry name" value="AMP-bd_C_sf"/>
</dbReference>
<dbReference type="InterPro" id="IPR020845">
    <property type="entry name" value="AMP-binding_CS"/>
</dbReference>
<dbReference type="InterPro" id="IPR000873">
    <property type="entry name" value="AMP-dep_synth/lig_dom"/>
</dbReference>
<dbReference type="InterPro" id="IPR042099">
    <property type="entry name" value="ANL_N_sf"/>
</dbReference>
<dbReference type="NCBIfam" id="NF006134">
    <property type="entry name" value="PRK08279.1"/>
    <property type="match status" value="1"/>
</dbReference>
<dbReference type="PANTHER" id="PTHR43107">
    <property type="entry name" value="LONG-CHAIN FATTY ACID TRANSPORT PROTEIN"/>
    <property type="match status" value="1"/>
</dbReference>
<dbReference type="PANTHER" id="PTHR43107:SF10">
    <property type="entry name" value="LONG-CHAIN FATTY ACID TRANSPORT PROTEIN 6"/>
    <property type="match status" value="1"/>
</dbReference>
<dbReference type="Pfam" id="PF00501">
    <property type="entry name" value="AMP-binding"/>
    <property type="match status" value="1"/>
</dbReference>
<dbReference type="Pfam" id="PF13193">
    <property type="entry name" value="AMP-binding_C"/>
    <property type="match status" value="1"/>
</dbReference>
<dbReference type="SUPFAM" id="SSF56801">
    <property type="entry name" value="Acetyl-CoA synthetase-like"/>
    <property type="match status" value="1"/>
</dbReference>
<dbReference type="PROSITE" id="PS00455">
    <property type="entry name" value="AMP_BINDING"/>
    <property type="match status" value="1"/>
</dbReference>
<keyword id="KW-1003">Cell membrane</keyword>
<keyword id="KW-0276">Fatty acid metabolism</keyword>
<keyword id="KW-0436">Ligase</keyword>
<keyword id="KW-0443">Lipid metabolism</keyword>
<keyword id="KW-0445">Lipid transport</keyword>
<keyword id="KW-0472">Membrane</keyword>
<keyword id="KW-0547">Nucleotide-binding</keyword>
<keyword id="KW-1267">Proteomics identification</keyword>
<keyword id="KW-1185">Reference proteome</keyword>
<keyword id="KW-0812">Transmembrane</keyword>
<keyword id="KW-1133">Transmembrane helix</keyword>
<keyword id="KW-0813">Transport</keyword>